<accession>B5RFM6</accession>
<comment type="function">
    <text evidence="1">Is probably a protein kinase regulator of UbiI activity which is involved in aerobic coenzyme Q (ubiquinone) biosynthesis.</text>
</comment>
<comment type="pathway">
    <text>Cofactor biosynthesis; ubiquinone biosynthesis [regulation].</text>
</comment>
<comment type="subcellular location">
    <subcellularLocation>
        <location evidence="1">Cell inner membrane</location>
        <topology evidence="1">Multi-pass membrane protein</topology>
    </subcellularLocation>
</comment>
<comment type="similarity">
    <text evidence="1">Belongs to the ABC1 family. UbiB subfamily.</text>
</comment>
<keyword id="KW-0067">ATP-binding</keyword>
<keyword id="KW-0997">Cell inner membrane</keyword>
<keyword id="KW-1003">Cell membrane</keyword>
<keyword id="KW-0418">Kinase</keyword>
<keyword id="KW-0472">Membrane</keyword>
<keyword id="KW-0547">Nucleotide-binding</keyword>
<keyword id="KW-0808">Transferase</keyword>
<keyword id="KW-0812">Transmembrane</keyword>
<keyword id="KW-1133">Transmembrane helix</keyword>
<keyword id="KW-0831">Ubiquinone biosynthesis</keyword>
<name>UBIB_SALG2</name>
<feature type="chain" id="PRO_1000123919" description="Probable protein kinase UbiB">
    <location>
        <begin position="1"/>
        <end position="546"/>
    </location>
</feature>
<feature type="transmembrane region" description="Helical" evidence="1">
    <location>
        <begin position="501"/>
        <end position="521"/>
    </location>
</feature>
<feature type="transmembrane region" description="Helical" evidence="1">
    <location>
        <begin position="522"/>
        <end position="542"/>
    </location>
</feature>
<feature type="domain" description="Protein kinase" evidence="1">
    <location>
        <begin position="124"/>
        <end position="502"/>
    </location>
</feature>
<feature type="active site" description="Proton acceptor" evidence="1">
    <location>
        <position position="288"/>
    </location>
</feature>
<feature type="binding site" evidence="1">
    <location>
        <begin position="130"/>
        <end position="138"/>
    </location>
    <ligand>
        <name>ATP</name>
        <dbReference type="ChEBI" id="CHEBI:30616"/>
    </ligand>
</feature>
<feature type="binding site" evidence="1">
    <location>
        <position position="153"/>
    </location>
    <ligand>
        <name>ATP</name>
        <dbReference type="ChEBI" id="CHEBI:30616"/>
    </ligand>
</feature>
<evidence type="ECO:0000255" key="1">
    <source>
        <dbReference type="HAMAP-Rule" id="MF_00414"/>
    </source>
</evidence>
<sequence>MTPGEVRRLYFIIRTFLSYGLDELIPRMRLTLPLRLWRYSLFWMPNRHKDKLLGERLRLALQELGPVWIKFGQMLSTRRDLFPPQIADQLALLQDKVAPFDGRLAKAQIEEAMGGLPVDAWFDDFDIQPLASASIAQVHTARLKSNGKEVVIKVIRPDILPVIQADLKLIYRLARWVPRLLPDGRRLRPTEVVREYEKTLIDELNLLRESANAIQLRRNFENSPMLYIPEVYSDYCSQNMMVMERIYGIPVSDVAALEKNGTNMKLLAERGVKVFFTQVFRDSFFHADMHPGNIFVSHEHPENPQYIGIDCGIVGSLNKEDKRYLAENFIAFFNRDYRKVAELHVDSGWVPPDTNVEDFEFAIRTVCEPIFEKPLAEISFGHVLLNLFNTARRFNMEVQPQLVLLQKTLLYVEGVGRQLYPQLDLWKTAKPFLESWIKDQVGIPALTRALKEKAPFWVEKMPEIPELVYDSLRQGKYLQHSVDKIARELQVNHVRQSQSRYLLGIGATLLLSGSFLLVNRPEWGLMPSWLMVGGVVVWLVGWRKTR</sequence>
<protein>
    <recommendedName>
        <fullName evidence="1">Probable protein kinase UbiB</fullName>
        <ecNumber evidence="1">2.7.-.-</ecNumber>
    </recommendedName>
    <alternativeName>
        <fullName evidence="1">Ubiquinone biosynthesis protein UbiB</fullName>
    </alternativeName>
</protein>
<gene>
    <name evidence="1" type="primary">ubiB</name>
    <name type="ordered locus">SG3479</name>
</gene>
<proteinExistence type="inferred from homology"/>
<reference key="1">
    <citation type="journal article" date="2008" name="Genome Res.">
        <title>Comparative genome analysis of Salmonella enteritidis PT4 and Salmonella gallinarum 287/91 provides insights into evolutionary and host adaptation pathways.</title>
        <authorList>
            <person name="Thomson N.R."/>
            <person name="Clayton D.J."/>
            <person name="Windhorst D."/>
            <person name="Vernikos G."/>
            <person name="Davidson S."/>
            <person name="Churcher C."/>
            <person name="Quail M.A."/>
            <person name="Stevens M."/>
            <person name="Jones M.A."/>
            <person name="Watson M."/>
            <person name="Barron A."/>
            <person name="Layton A."/>
            <person name="Pickard D."/>
            <person name="Kingsley R.A."/>
            <person name="Bignell A."/>
            <person name="Clark L."/>
            <person name="Harris B."/>
            <person name="Ormond D."/>
            <person name="Abdellah Z."/>
            <person name="Brooks K."/>
            <person name="Cherevach I."/>
            <person name="Chillingworth T."/>
            <person name="Woodward J."/>
            <person name="Norberczak H."/>
            <person name="Lord A."/>
            <person name="Arrowsmith C."/>
            <person name="Jagels K."/>
            <person name="Moule S."/>
            <person name="Mungall K."/>
            <person name="Saunders M."/>
            <person name="Whitehead S."/>
            <person name="Chabalgoity J.A."/>
            <person name="Maskell D."/>
            <person name="Humphreys T."/>
            <person name="Roberts M."/>
            <person name="Barrow P.A."/>
            <person name="Dougan G."/>
            <person name="Parkhill J."/>
        </authorList>
    </citation>
    <scope>NUCLEOTIDE SEQUENCE [LARGE SCALE GENOMIC DNA]</scope>
    <source>
        <strain>287/91 / NCTC 13346</strain>
    </source>
</reference>
<organism>
    <name type="scientific">Salmonella gallinarum (strain 287/91 / NCTC 13346)</name>
    <dbReference type="NCBI Taxonomy" id="550538"/>
    <lineage>
        <taxon>Bacteria</taxon>
        <taxon>Pseudomonadati</taxon>
        <taxon>Pseudomonadota</taxon>
        <taxon>Gammaproteobacteria</taxon>
        <taxon>Enterobacterales</taxon>
        <taxon>Enterobacteriaceae</taxon>
        <taxon>Salmonella</taxon>
    </lineage>
</organism>
<dbReference type="EC" id="2.7.-.-" evidence="1"/>
<dbReference type="EMBL" id="AM933173">
    <property type="protein sequence ID" value="CAR39269.1"/>
    <property type="molecule type" value="Genomic_DNA"/>
</dbReference>
<dbReference type="RefSeq" id="WP_000187555.1">
    <property type="nucleotide sequence ID" value="NC_011274.1"/>
</dbReference>
<dbReference type="SMR" id="B5RFM6"/>
<dbReference type="KEGG" id="seg:SG3479"/>
<dbReference type="HOGENOM" id="CLU_006533_0_0_6"/>
<dbReference type="UniPathway" id="UPA00232"/>
<dbReference type="Proteomes" id="UP000008321">
    <property type="component" value="Chromosome"/>
</dbReference>
<dbReference type="GO" id="GO:0005886">
    <property type="term" value="C:plasma membrane"/>
    <property type="evidence" value="ECO:0007669"/>
    <property type="project" value="UniProtKB-SubCell"/>
</dbReference>
<dbReference type="GO" id="GO:0005524">
    <property type="term" value="F:ATP binding"/>
    <property type="evidence" value="ECO:0007669"/>
    <property type="project" value="UniProtKB-KW"/>
</dbReference>
<dbReference type="GO" id="GO:0004672">
    <property type="term" value="F:protein kinase activity"/>
    <property type="evidence" value="ECO:0007669"/>
    <property type="project" value="UniProtKB-UniRule"/>
</dbReference>
<dbReference type="GO" id="GO:0010795">
    <property type="term" value="P:regulation of ubiquinone biosynthetic process"/>
    <property type="evidence" value="ECO:0007669"/>
    <property type="project" value="UniProtKB-UniRule"/>
</dbReference>
<dbReference type="GO" id="GO:0006744">
    <property type="term" value="P:ubiquinone biosynthetic process"/>
    <property type="evidence" value="ECO:0007669"/>
    <property type="project" value="UniProtKB-UniPathway"/>
</dbReference>
<dbReference type="CDD" id="cd13972">
    <property type="entry name" value="UbiB"/>
    <property type="match status" value="1"/>
</dbReference>
<dbReference type="HAMAP" id="MF_00414">
    <property type="entry name" value="UbiB"/>
    <property type="match status" value="1"/>
</dbReference>
<dbReference type="InterPro" id="IPR004147">
    <property type="entry name" value="ABC1_dom"/>
</dbReference>
<dbReference type="InterPro" id="IPR011009">
    <property type="entry name" value="Kinase-like_dom_sf"/>
</dbReference>
<dbReference type="InterPro" id="IPR010232">
    <property type="entry name" value="UbiB"/>
</dbReference>
<dbReference type="InterPro" id="IPR045308">
    <property type="entry name" value="UbiB_bact"/>
</dbReference>
<dbReference type="InterPro" id="IPR050154">
    <property type="entry name" value="UbiB_kinase"/>
</dbReference>
<dbReference type="NCBIfam" id="NF003404">
    <property type="entry name" value="PRK04750.1"/>
    <property type="match status" value="1"/>
</dbReference>
<dbReference type="NCBIfam" id="TIGR01982">
    <property type="entry name" value="UbiB"/>
    <property type="match status" value="1"/>
</dbReference>
<dbReference type="PANTHER" id="PTHR10566">
    <property type="entry name" value="CHAPERONE-ACTIVITY OF BC1 COMPLEX CABC1 -RELATED"/>
    <property type="match status" value="1"/>
</dbReference>
<dbReference type="PANTHER" id="PTHR10566:SF113">
    <property type="entry name" value="PROTEIN ACTIVITY OF BC1 COMPLEX KINASE 7, CHLOROPLASTIC"/>
    <property type="match status" value="1"/>
</dbReference>
<dbReference type="Pfam" id="PF03109">
    <property type="entry name" value="ABC1"/>
    <property type="match status" value="1"/>
</dbReference>
<dbReference type="SUPFAM" id="SSF56112">
    <property type="entry name" value="Protein kinase-like (PK-like)"/>
    <property type="match status" value="1"/>
</dbReference>